<name>MED17_XENTR</name>
<protein>
    <recommendedName>
        <fullName>Mediator of RNA polymerase II transcription subunit 17</fullName>
    </recommendedName>
    <alternativeName>
        <fullName>Cofactor required for Sp1 transcriptional activation subunit 6</fullName>
        <shortName>CRSP complex subunit 6</shortName>
    </alternativeName>
    <alternativeName>
        <fullName>Mediator complex subunit 17</fullName>
    </alternativeName>
</protein>
<evidence type="ECO:0000250" key="1"/>
<evidence type="ECO:0000305" key="2"/>
<proteinExistence type="evidence at transcript level"/>
<dbReference type="EMBL" id="BC118725">
    <property type="protein sequence ID" value="AAI18726.1"/>
    <property type="molecule type" value="mRNA"/>
</dbReference>
<dbReference type="RefSeq" id="NP_001016974.1">
    <property type="nucleotide sequence ID" value="NM_001016974.3"/>
</dbReference>
<dbReference type="SMR" id="Q0VFR9"/>
<dbReference type="FunCoup" id="Q0VFR9">
    <property type="interactions" value="4087"/>
</dbReference>
<dbReference type="STRING" id="8364.ENSXETP00000027764"/>
<dbReference type="PaxDb" id="8364-ENSXETP00000037314"/>
<dbReference type="DNASU" id="549728"/>
<dbReference type="GeneID" id="549728"/>
<dbReference type="KEGG" id="xtr:549728"/>
<dbReference type="AGR" id="Xenbase:XB-GENE-1008314"/>
<dbReference type="CTD" id="9440"/>
<dbReference type="Xenbase" id="XB-GENE-1008314">
    <property type="gene designation" value="med17"/>
</dbReference>
<dbReference type="eggNOG" id="KOG4512">
    <property type="taxonomic scope" value="Eukaryota"/>
</dbReference>
<dbReference type="HOGENOM" id="CLU_028003_1_0_1"/>
<dbReference type="InParanoid" id="Q0VFR9"/>
<dbReference type="OMA" id="HMSYEPQ"/>
<dbReference type="OrthoDB" id="10058398at2759"/>
<dbReference type="PhylomeDB" id="Q0VFR9"/>
<dbReference type="TreeFam" id="TF323615"/>
<dbReference type="Proteomes" id="UP000008143">
    <property type="component" value="Chromosome 2"/>
</dbReference>
<dbReference type="Bgee" id="ENSXETG00000017118">
    <property type="expression patterns" value="Expressed in neurula embryo and 12 other cell types or tissues"/>
</dbReference>
<dbReference type="ExpressionAtlas" id="Q0VFR9">
    <property type="expression patterns" value="differential"/>
</dbReference>
<dbReference type="GO" id="GO:0016592">
    <property type="term" value="C:mediator complex"/>
    <property type="evidence" value="ECO:0007669"/>
    <property type="project" value="InterPro"/>
</dbReference>
<dbReference type="GO" id="GO:0003712">
    <property type="term" value="F:transcription coregulator activity"/>
    <property type="evidence" value="ECO:0007669"/>
    <property type="project" value="InterPro"/>
</dbReference>
<dbReference type="GO" id="GO:0006357">
    <property type="term" value="P:regulation of transcription by RNA polymerase II"/>
    <property type="evidence" value="ECO:0007669"/>
    <property type="project" value="InterPro"/>
</dbReference>
<dbReference type="InterPro" id="IPR019313">
    <property type="entry name" value="Mediator_Med17"/>
</dbReference>
<dbReference type="PANTHER" id="PTHR13114">
    <property type="entry name" value="MEDIATOR OF RNA POLYMERASE II TRANSCRIPTION SUBUNIT 17"/>
    <property type="match status" value="1"/>
</dbReference>
<dbReference type="PANTHER" id="PTHR13114:SF7">
    <property type="entry name" value="MEDIATOR OF RNA POLYMERASE II TRANSCRIPTION SUBUNIT 17"/>
    <property type="match status" value="1"/>
</dbReference>
<dbReference type="Pfam" id="PF10156">
    <property type="entry name" value="Med17"/>
    <property type="match status" value="1"/>
</dbReference>
<sequence>MSGVPAVNISIESSAEKQVQEVGLDGSETYVLPLSMSQNLARLAQRIDFSQESGEEEAEAARELEWAEQEEEEGLVKFQPSLWPWDSVRNNLRSTLTEMCVLYDVLNIVKEKRYMHLDPVSQEALPPKPNQHGLLLVSKKKSLAAAAQILLKGAERLSKSVAENQENKRQRDFNSELLRLRQHWKLRKLGDKILGDLSYRSAGSLFPHHGTFEVIKNTDIDLDKKMPEDYCPLDVHIPSDLEGSAYLKVSIQKQAPDIGDLGTVNLFRRPLPKAKPGTPHWQTRLEAAQNVLLCKEVFAQLSREAVQIKSQIPHIVVKNQIISQPFPGLQLSISLCHSSNDKKSQKSNSDKMGAEDHLYVLEHNLHQLIREFHKQTLSNIVMPHPASAPFGHKRMRLAGPQAFDKNEMGFMQQNEGLLEKIIKQAKHIFLRRRTARTIDSLASRIEDPQIQAHWSSINDVYESSVKVLITSQGYEQICKSIQLQLNIGVDQIRVVHRDGRVITLSHQEQELQDFLLSQMSQHQVLAVQQLAKVMGWHVLSFTNHVGLGQVESVGNASSITVTSPNGDYAISVRNGPESGTKVMVQFPRSQCKDLPKGDVLQENKWQYLRGPYKEVQWNKMEGRNFVYKMELLMAALTPC</sequence>
<accession>Q0VFR9</accession>
<gene>
    <name type="primary">med17</name>
    <name type="synonym">crsp6</name>
</gene>
<keyword id="KW-0010">Activator</keyword>
<keyword id="KW-0539">Nucleus</keyword>
<keyword id="KW-1185">Reference proteome</keyword>
<keyword id="KW-0804">Transcription</keyword>
<keyword id="KW-0805">Transcription regulation</keyword>
<comment type="function">
    <text evidence="1">Component of the Mediator complex, a coactivator involved in the regulated transcription of nearly all RNA polymerase II-dependent genes. Mediator functions as a bridge to convey information from gene-specific regulatory proteins to the basal RNA polymerase II transcription machinery. Mediator is recruited to promoters by direct interactions with regulatory proteins and serves as a scaffold for the assembly of a functional preinitiation complex with RNA polymerase II and the general transcription factors (By similarity).</text>
</comment>
<comment type="subunit">
    <text evidence="1">Component of the Mediator complex.</text>
</comment>
<comment type="subcellular location">
    <subcellularLocation>
        <location evidence="2">Nucleus</location>
    </subcellularLocation>
</comment>
<comment type="similarity">
    <text evidence="2">Belongs to the Mediator complex subunit 17 family.</text>
</comment>
<organism>
    <name type="scientific">Xenopus tropicalis</name>
    <name type="common">Western clawed frog</name>
    <name type="synonym">Silurana tropicalis</name>
    <dbReference type="NCBI Taxonomy" id="8364"/>
    <lineage>
        <taxon>Eukaryota</taxon>
        <taxon>Metazoa</taxon>
        <taxon>Chordata</taxon>
        <taxon>Craniata</taxon>
        <taxon>Vertebrata</taxon>
        <taxon>Euteleostomi</taxon>
        <taxon>Amphibia</taxon>
        <taxon>Batrachia</taxon>
        <taxon>Anura</taxon>
        <taxon>Pipoidea</taxon>
        <taxon>Pipidae</taxon>
        <taxon>Xenopodinae</taxon>
        <taxon>Xenopus</taxon>
        <taxon>Silurana</taxon>
    </lineage>
</organism>
<feature type="chain" id="PRO_0000304703" description="Mediator of RNA polymerase II transcription subunit 17">
    <location>
        <begin position="1"/>
        <end position="639"/>
    </location>
</feature>
<reference key="1">
    <citation type="submission" date="2006-07" db="EMBL/GenBank/DDBJ databases">
        <authorList>
            <consortium name="NIH - Xenopus Gene Collection (XGC) project"/>
        </authorList>
    </citation>
    <scope>NUCLEOTIDE SEQUENCE [LARGE SCALE MRNA]</scope>
    <source>
        <tissue>Brain</tissue>
    </source>
</reference>